<gene>
    <name type="primary">yxjF</name>
    <name type="ordered locus">BSU38970</name>
    <name type="ORF">N15M</name>
</gene>
<reference key="1">
    <citation type="journal article" date="1996" name="Microbiology">
        <title>Sequencing of a 65 kb region of the Bacillus subtilis genome containing the lic and cel loci, and creation of a 177 kb contig covering the gnt-sacXY region.</title>
        <authorList>
            <person name="Yoshida K."/>
            <person name="Shindo K."/>
            <person name="Sano H."/>
            <person name="Seki S."/>
            <person name="Fujimura M."/>
            <person name="Yanai N."/>
            <person name="Miwa Y."/>
            <person name="Fujita Y."/>
        </authorList>
    </citation>
    <scope>NUCLEOTIDE SEQUENCE [GENOMIC DNA]</scope>
    <source>
        <strain>168 / BGSC1A1</strain>
    </source>
</reference>
<reference key="2">
    <citation type="journal article" date="1997" name="Nature">
        <title>The complete genome sequence of the Gram-positive bacterium Bacillus subtilis.</title>
        <authorList>
            <person name="Kunst F."/>
            <person name="Ogasawara N."/>
            <person name="Moszer I."/>
            <person name="Albertini A.M."/>
            <person name="Alloni G."/>
            <person name="Azevedo V."/>
            <person name="Bertero M.G."/>
            <person name="Bessieres P."/>
            <person name="Bolotin A."/>
            <person name="Borchert S."/>
            <person name="Borriss R."/>
            <person name="Boursier L."/>
            <person name="Brans A."/>
            <person name="Braun M."/>
            <person name="Brignell S.C."/>
            <person name="Bron S."/>
            <person name="Brouillet S."/>
            <person name="Bruschi C.V."/>
            <person name="Caldwell B."/>
            <person name="Capuano V."/>
            <person name="Carter N.M."/>
            <person name="Choi S.-K."/>
            <person name="Codani J.-J."/>
            <person name="Connerton I.F."/>
            <person name="Cummings N.J."/>
            <person name="Daniel R.A."/>
            <person name="Denizot F."/>
            <person name="Devine K.M."/>
            <person name="Duesterhoeft A."/>
            <person name="Ehrlich S.D."/>
            <person name="Emmerson P.T."/>
            <person name="Entian K.-D."/>
            <person name="Errington J."/>
            <person name="Fabret C."/>
            <person name="Ferrari E."/>
            <person name="Foulger D."/>
            <person name="Fritz C."/>
            <person name="Fujita M."/>
            <person name="Fujita Y."/>
            <person name="Fuma S."/>
            <person name="Galizzi A."/>
            <person name="Galleron N."/>
            <person name="Ghim S.-Y."/>
            <person name="Glaser P."/>
            <person name="Goffeau A."/>
            <person name="Golightly E.J."/>
            <person name="Grandi G."/>
            <person name="Guiseppi G."/>
            <person name="Guy B.J."/>
            <person name="Haga K."/>
            <person name="Haiech J."/>
            <person name="Harwood C.R."/>
            <person name="Henaut A."/>
            <person name="Hilbert H."/>
            <person name="Holsappel S."/>
            <person name="Hosono S."/>
            <person name="Hullo M.-F."/>
            <person name="Itaya M."/>
            <person name="Jones L.-M."/>
            <person name="Joris B."/>
            <person name="Karamata D."/>
            <person name="Kasahara Y."/>
            <person name="Klaerr-Blanchard M."/>
            <person name="Klein C."/>
            <person name="Kobayashi Y."/>
            <person name="Koetter P."/>
            <person name="Koningstein G."/>
            <person name="Krogh S."/>
            <person name="Kumano M."/>
            <person name="Kurita K."/>
            <person name="Lapidus A."/>
            <person name="Lardinois S."/>
            <person name="Lauber J."/>
            <person name="Lazarevic V."/>
            <person name="Lee S.-M."/>
            <person name="Levine A."/>
            <person name="Liu H."/>
            <person name="Masuda S."/>
            <person name="Mauel C."/>
            <person name="Medigue C."/>
            <person name="Medina N."/>
            <person name="Mellado R.P."/>
            <person name="Mizuno M."/>
            <person name="Moestl D."/>
            <person name="Nakai S."/>
            <person name="Noback M."/>
            <person name="Noone D."/>
            <person name="O'Reilly M."/>
            <person name="Ogawa K."/>
            <person name="Ogiwara A."/>
            <person name="Oudega B."/>
            <person name="Park S.-H."/>
            <person name="Parro V."/>
            <person name="Pohl T.M."/>
            <person name="Portetelle D."/>
            <person name="Porwollik S."/>
            <person name="Prescott A.M."/>
            <person name="Presecan E."/>
            <person name="Pujic P."/>
            <person name="Purnelle B."/>
            <person name="Rapoport G."/>
            <person name="Rey M."/>
            <person name="Reynolds S."/>
            <person name="Rieger M."/>
            <person name="Rivolta C."/>
            <person name="Rocha E."/>
            <person name="Roche B."/>
            <person name="Rose M."/>
            <person name="Sadaie Y."/>
            <person name="Sato T."/>
            <person name="Scanlan E."/>
            <person name="Schleich S."/>
            <person name="Schroeter R."/>
            <person name="Scoffone F."/>
            <person name="Sekiguchi J."/>
            <person name="Sekowska A."/>
            <person name="Seror S.J."/>
            <person name="Serror P."/>
            <person name="Shin B.-S."/>
            <person name="Soldo B."/>
            <person name="Sorokin A."/>
            <person name="Tacconi E."/>
            <person name="Takagi T."/>
            <person name="Takahashi H."/>
            <person name="Takemaru K."/>
            <person name="Takeuchi M."/>
            <person name="Tamakoshi A."/>
            <person name="Tanaka T."/>
            <person name="Terpstra P."/>
            <person name="Tognoni A."/>
            <person name="Tosato V."/>
            <person name="Uchiyama S."/>
            <person name="Vandenbol M."/>
            <person name="Vannier F."/>
            <person name="Vassarotti A."/>
            <person name="Viari A."/>
            <person name="Wambutt R."/>
            <person name="Wedler E."/>
            <person name="Wedler H."/>
            <person name="Weitzenegger T."/>
            <person name="Winters P."/>
            <person name="Wipat A."/>
            <person name="Yamamoto H."/>
            <person name="Yamane K."/>
            <person name="Yasumoto K."/>
            <person name="Yata K."/>
            <person name="Yoshida K."/>
            <person name="Yoshikawa H.-F."/>
            <person name="Zumstein E."/>
            <person name="Yoshikawa H."/>
            <person name="Danchin A."/>
        </authorList>
    </citation>
    <scope>NUCLEOTIDE SEQUENCE [LARGE SCALE GENOMIC DNA]</scope>
    <source>
        <strain>168</strain>
    </source>
</reference>
<reference key="3">
    <citation type="journal article" date="2009" name="Microbiology">
        <title>From a consortium sequence to a unified sequence: the Bacillus subtilis 168 reference genome a decade later.</title>
        <authorList>
            <person name="Barbe V."/>
            <person name="Cruveiller S."/>
            <person name="Kunst F."/>
            <person name="Lenoble P."/>
            <person name="Meurice G."/>
            <person name="Sekowska A."/>
            <person name="Vallenet D."/>
            <person name="Wang T."/>
            <person name="Moszer I."/>
            <person name="Medigue C."/>
            <person name="Danchin A."/>
        </authorList>
    </citation>
    <scope>SEQUENCE REVISION TO 16</scope>
</reference>
<proteinExistence type="inferred from homology"/>
<protein>
    <recommendedName>
        <fullName>Uncharacterized oxidoreductase YxjF</fullName>
        <ecNumber>1.-.-.-</ecNumber>
    </recommendedName>
</protein>
<accession>P42317</accession>
<organism>
    <name type="scientific">Bacillus subtilis (strain 168)</name>
    <dbReference type="NCBI Taxonomy" id="224308"/>
    <lineage>
        <taxon>Bacteria</taxon>
        <taxon>Bacillati</taxon>
        <taxon>Bacillota</taxon>
        <taxon>Bacilli</taxon>
        <taxon>Bacillales</taxon>
        <taxon>Bacillaceae</taxon>
        <taxon>Bacillus</taxon>
    </lineage>
</organism>
<keyword id="KW-0520">NAD</keyword>
<keyword id="KW-0560">Oxidoreductase</keyword>
<keyword id="KW-1185">Reference proteome</keyword>
<feature type="chain" id="PRO_0000054853" description="Uncharacterized oxidoreductase YxjF">
    <location>
        <begin position="1"/>
        <end position="257"/>
    </location>
</feature>
<feature type="active site" description="Proton acceptor" evidence="2">
    <location>
        <position position="152"/>
    </location>
</feature>
<feature type="binding site" evidence="1">
    <location>
        <position position="34"/>
    </location>
    <ligand>
        <name>NAD(+)</name>
        <dbReference type="ChEBI" id="CHEBI:57540"/>
    </ligand>
</feature>
<feature type="binding site" evidence="1">
    <location>
        <position position="60"/>
    </location>
    <ligand>
        <name>NAD(+)</name>
        <dbReference type="ChEBI" id="CHEBI:57540"/>
    </ligand>
</feature>
<feature type="binding site" evidence="1">
    <location>
        <position position="61"/>
    </location>
    <ligand>
        <name>NAD(+)</name>
        <dbReference type="ChEBI" id="CHEBI:57540"/>
    </ligand>
</feature>
<feature type="binding site" evidence="1">
    <location>
        <position position="87"/>
    </location>
    <ligand>
        <name>NAD(+)</name>
        <dbReference type="ChEBI" id="CHEBI:57540"/>
    </ligand>
</feature>
<feature type="binding site" evidence="1">
    <location>
        <position position="152"/>
    </location>
    <ligand>
        <name>NAD(+)</name>
        <dbReference type="ChEBI" id="CHEBI:57540"/>
    </ligand>
</feature>
<feature type="binding site" evidence="1">
    <location>
        <position position="156"/>
    </location>
    <ligand>
        <name>NAD(+)</name>
        <dbReference type="ChEBI" id="CHEBI:57540"/>
    </ligand>
</feature>
<feature type="sequence conflict" description="In Ref. 1; BAA11707." evidence="3" ref="1">
    <original>G</original>
    <variation>R</variation>
    <location>
        <position position="16"/>
    </location>
</feature>
<sequence length="257" mass="27512">MRKQVALVTGAAGGIGFEIAREFAREGASVIVSDLRPEACEKAASKLAEEGFDAAAIPYDVTKEAQVADTVNVIQKQYGRLDILVNNAGIQHVAPIEEFPTDTFEQLIKVMLTAPFIAMKHVFPIMKKQQFGRIINIASVNGLVGFAGKSAYNSAKHGVIGLTKVGALEGAPHGITVNALCPGYVDTQLVRNQLSDLSKTRNVPYDSVLEQVIFPLVPQKRLLSVKEIADYAVFLASEKAKGVTGQAVVLDGGYTAQ</sequence>
<comment type="similarity">
    <text evidence="3">Belongs to the short-chain dehydrogenases/reductases (SDR) family.</text>
</comment>
<dbReference type="EC" id="1.-.-.-"/>
<dbReference type="EMBL" id="D83026">
    <property type="protein sequence ID" value="BAA11707.1"/>
    <property type="molecule type" value="Genomic_DNA"/>
</dbReference>
<dbReference type="EMBL" id="AL009126">
    <property type="protein sequence ID" value="CAB15923.2"/>
    <property type="molecule type" value="Genomic_DNA"/>
</dbReference>
<dbReference type="PIR" id="D70079">
    <property type="entry name" value="D70079"/>
</dbReference>
<dbReference type="RefSeq" id="NP_391776.2">
    <property type="nucleotide sequence ID" value="NC_000964.3"/>
</dbReference>
<dbReference type="RefSeq" id="WP_003244042.1">
    <property type="nucleotide sequence ID" value="NZ_OZ025638.1"/>
</dbReference>
<dbReference type="SMR" id="P42317"/>
<dbReference type="FunCoup" id="P42317">
    <property type="interactions" value="31"/>
</dbReference>
<dbReference type="STRING" id="224308.BSU38970"/>
<dbReference type="PaxDb" id="224308-BSU38970"/>
<dbReference type="EnsemblBacteria" id="CAB15923">
    <property type="protein sequence ID" value="CAB15923"/>
    <property type="gene ID" value="BSU_38970"/>
</dbReference>
<dbReference type="GeneID" id="937450"/>
<dbReference type="KEGG" id="bsu:BSU38970"/>
<dbReference type="PATRIC" id="fig|224308.179.peg.4217"/>
<dbReference type="eggNOG" id="COG1028">
    <property type="taxonomic scope" value="Bacteria"/>
</dbReference>
<dbReference type="InParanoid" id="P42317"/>
<dbReference type="OrthoDB" id="9803333at2"/>
<dbReference type="PhylomeDB" id="P42317"/>
<dbReference type="BioCyc" id="BSUB:BSU38970-MONOMER"/>
<dbReference type="Proteomes" id="UP000001570">
    <property type="component" value="Chromosome"/>
</dbReference>
<dbReference type="GO" id="GO:0003858">
    <property type="term" value="F:3-hydroxybutyrate dehydrogenase activity"/>
    <property type="evidence" value="ECO:0007669"/>
    <property type="project" value="InterPro"/>
</dbReference>
<dbReference type="GO" id="GO:0016616">
    <property type="term" value="F:oxidoreductase activity, acting on the CH-OH group of donors, NAD or NADP as acceptor"/>
    <property type="evidence" value="ECO:0000318"/>
    <property type="project" value="GO_Central"/>
</dbReference>
<dbReference type="GO" id="GO:0048038">
    <property type="term" value="F:quinone binding"/>
    <property type="evidence" value="ECO:0000318"/>
    <property type="project" value="GO_Central"/>
</dbReference>
<dbReference type="GO" id="GO:0006633">
    <property type="term" value="P:fatty acid biosynthetic process"/>
    <property type="evidence" value="ECO:0000318"/>
    <property type="project" value="GO_Central"/>
</dbReference>
<dbReference type="FunFam" id="3.40.50.720:FF:000981">
    <property type="entry name" value="3-hydroxybutyrate dehydrogenase"/>
    <property type="match status" value="1"/>
</dbReference>
<dbReference type="Gene3D" id="3.40.50.720">
    <property type="entry name" value="NAD(P)-binding Rossmann-like Domain"/>
    <property type="match status" value="1"/>
</dbReference>
<dbReference type="InterPro" id="IPR011294">
    <property type="entry name" value="3-OHbutyrate_DH"/>
</dbReference>
<dbReference type="InterPro" id="IPR036291">
    <property type="entry name" value="NAD(P)-bd_dom_sf"/>
</dbReference>
<dbReference type="InterPro" id="IPR020904">
    <property type="entry name" value="Sc_DH/Rdtase_CS"/>
</dbReference>
<dbReference type="InterPro" id="IPR050259">
    <property type="entry name" value="SDR"/>
</dbReference>
<dbReference type="InterPro" id="IPR002347">
    <property type="entry name" value="SDR_fam"/>
</dbReference>
<dbReference type="NCBIfam" id="TIGR01963">
    <property type="entry name" value="PHB_DH"/>
    <property type="match status" value="1"/>
</dbReference>
<dbReference type="NCBIfam" id="NF009093">
    <property type="entry name" value="PRK12429.1"/>
    <property type="match status" value="1"/>
</dbReference>
<dbReference type="PANTHER" id="PTHR42879">
    <property type="entry name" value="3-OXOACYL-(ACYL-CARRIER-PROTEIN) REDUCTASE"/>
    <property type="match status" value="1"/>
</dbReference>
<dbReference type="PANTHER" id="PTHR42879:SF2">
    <property type="entry name" value="3-OXOACYL-[ACYL-CARRIER-PROTEIN] REDUCTASE FABG"/>
    <property type="match status" value="1"/>
</dbReference>
<dbReference type="Pfam" id="PF00106">
    <property type="entry name" value="adh_short"/>
    <property type="match status" value="1"/>
</dbReference>
<dbReference type="PRINTS" id="PR00081">
    <property type="entry name" value="GDHRDH"/>
</dbReference>
<dbReference type="PRINTS" id="PR00080">
    <property type="entry name" value="SDRFAMILY"/>
</dbReference>
<dbReference type="SMART" id="SM00822">
    <property type="entry name" value="PKS_KR"/>
    <property type="match status" value="1"/>
</dbReference>
<dbReference type="SUPFAM" id="SSF51735">
    <property type="entry name" value="NAD(P)-binding Rossmann-fold domains"/>
    <property type="match status" value="1"/>
</dbReference>
<dbReference type="PROSITE" id="PS00061">
    <property type="entry name" value="ADH_SHORT"/>
    <property type="match status" value="1"/>
</dbReference>
<name>YXJF_BACSU</name>
<evidence type="ECO:0000250" key="1">
    <source>
        <dbReference type="UniProtKB" id="Q9KJF1"/>
    </source>
</evidence>
<evidence type="ECO:0000255" key="2">
    <source>
        <dbReference type="PROSITE-ProRule" id="PRU10001"/>
    </source>
</evidence>
<evidence type="ECO:0000305" key="3"/>